<gene>
    <name evidence="1" type="primary">adk</name>
    <name type="ordered locus">NT01EI_1123</name>
</gene>
<name>KAD_EDWI9</name>
<dbReference type="EC" id="2.7.4.3" evidence="1"/>
<dbReference type="EMBL" id="CP001600">
    <property type="protein sequence ID" value="ACR68334.1"/>
    <property type="molecule type" value="Genomic_DNA"/>
</dbReference>
<dbReference type="RefSeq" id="WP_015870511.1">
    <property type="nucleotide sequence ID" value="NZ_CP169062.1"/>
</dbReference>
<dbReference type="SMR" id="C5BD16"/>
<dbReference type="STRING" id="67780.B6E78_15990"/>
<dbReference type="GeneID" id="69538159"/>
<dbReference type="KEGG" id="eic:NT01EI_1123"/>
<dbReference type="PATRIC" id="fig|634503.3.peg.1021"/>
<dbReference type="HOGENOM" id="CLU_032354_1_2_6"/>
<dbReference type="OrthoDB" id="9805030at2"/>
<dbReference type="UniPathway" id="UPA00588">
    <property type="reaction ID" value="UER00649"/>
</dbReference>
<dbReference type="Proteomes" id="UP000001485">
    <property type="component" value="Chromosome"/>
</dbReference>
<dbReference type="GO" id="GO:0005737">
    <property type="term" value="C:cytoplasm"/>
    <property type="evidence" value="ECO:0007669"/>
    <property type="project" value="UniProtKB-SubCell"/>
</dbReference>
<dbReference type="GO" id="GO:0004017">
    <property type="term" value="F:adenylate kinase activity"/>
    <property type="evidence" value="ECO:0007669"/>
    <property type="project" value="UniProtKB-UniRule"/>
</dbReference>
<dbReference type="GO" id="GO:0005524">
    <property type="term" value="F:ATP binding"/>
    <property type="evidence" value="ECO:0007669"/>
    <property type="project" value="UniProtKB-UniRule"/>
</dbReference>
<dbReference type="GO" id="GO:0044209">
    <property type="term" value="P:AMP salvage"/>
    <property type="evidence" value="ECO:0007669"/>
    <property type="project" value="UniProtKB-UniRule"/>
</dbReference>
<dbReference type="CDD" id="cd01428">
    <property type="entry name" value="ADK"/>
    <property type="match status" value="1"/>
</dbReference>
<dbReference type="FunFam" id="3.40.50.300:FF:000106">
    <property type="entry name" value="Adenylate kinase mitochondrial"/>
    <property type="match status" value="1"/>
</dbReference>
<dbReference type="Gene3D" id="3.40.50.300">
    <property type="entry name" value="P-loop containing nucleotide triphosphate hydrolases"/>
    <property type="match status" value="1"/>
</dbReference>
<dbReference type="HAMAP" id="MF_00235">
    <property type="entry name" value="Adenylate_kinase_Adk"/>
    <property type="match status" value="1"/>
</dbReference>
<dbReference type="InterPro" id="IPR006259">
    <property type="entry name" value="Adenyl_kin_sub"/>
</dbReference>
<dbReference type="InterPro" id="IPR000850">
    <property type="entry name" value="Adenylat/UMP-CMP_kin"/>
</dbReference>
<dbReference type="InterPro" id="IPR033690">
    <property type="entry name" value="Adenylat_kinase_CS"/>
</dbReference>
<dbReference type="InterPro" id="IPR007862">
    <property type="entry name" value="Adenylate_kinase_lid-dom"/>
</dbReference>
<dbReference type="InterPro" id="IPR027417">
    <property type="entry name" value="P-loop_NTPase"/>
</dbReference>
<dbReference type="NCBIfam" id="TIGR01351">
    <property type="entry name" value="adk"/>
    <property type="match status" value="1"/>
</dbReference>
<dbReference type="NCBIfam" id="NF001379">
    <property type="entry name" value="PRK00279.1-1"/>
    <property type="match status" value="1"/>
</dbReference>
<dbReference type="NCBIfam" id="NF001380">
    <property type="entry name" value="PRK00279.1-2"/>
    <property type="match status" value="1"/>
</dbReference>
<dbReference type="NCBIfam" id="NF001381">
    <property type="entry name" value="PRK00279.1-3"/>
    <property type="match status" value="1"/>
</dbReference>
<dbReference type="NCBIfam" id="NF011100">
    <property type="entry name" value="PRK14527.1"/>
    <property type="match status" value="1"/>
</dbReference>
<dbReference type="PANTHER" id="PTHR23359">
    <property type="entry name" value="NUCLEOTIDE KINASE"/>
    <property type="match status" value="1"/>
</dbReference>
<dbReference type="Pfam" id="PF00406">
    <property type="entry name" value="ADK"/>
    <property type="match status" value="1"/>
</dbReference>
<dbReference type="Pfam" id="PF05191">
    <property type="entry name" value="ADK_lid"/>
    <property type="match status" value="1"/>
</dbReference>
<dbReference type="PRINTS" id="PR00094">
    <property type="entry name" value="ADENYLTKNASE"/>
</dbReference>
<dbReference type="SUPFAM" id="SSF52540">
    <property type="entry name" value="P-loop containing nucleoside triphosphate hydrolases"/>
    <property type="match status" value="1"/>
</dbReference>
<dbReference type="PROSITE" id="PS00113">
    <property type="entry name" value="ADENYLATE_KINASE"/>
    <property type="match status" value="1"/>
</dbReference>
<keyword id="KW-0067">ATP-binding</keyword>
<keyword id="KW-0963">Cytoplasm</keyword>
<keyword id="KW-0418">Kinase</keyword>
<keyword id="KW-0545">Nucleotide biosynthesis</keyword>
<keyword id="KW-0547">Nucleotide-binding</keyword>
<keyword id="KW-0808">Transferase</keyword>
<feature type="chain" id="PRO_1000204409" description="Adenylate kinase">
    <location>
        <begin position="1"/>
        <end position="214"/>
    </location>
</feature>
<feature type="region of interest" description="NMP" evidence="1">
    <location>
        <begin position="30"/>
        <end position="59"/>
    </location>
</feature>
<feature type="region of interest" description="LID">
    <location>
        <begin position="122"/>
        <end position="159"/>
    </location>
</feature>
<feature type="binding site" evidence="1">
    <location>
        <begin position="10"/>
        <end position="15"/>
    </location>
    <ligand>
        <name>ATP</name>
        <dbReference type="ChEBI" id="CHEBI:30616"/>
    </ligand>
</feature>
<feature type="binding site" evidence="1">
    <location>
        <position position="31"/>
    </location>
    <ligand>
        <name>AMP</name>
        <dbReference type="ChEBI" id="CHEBI:456215"/>
    </ligand>
</feature>
<feature type="binding site" evidence="1">
    <location>
        <position position="36"/>
    </location>
    <ligand>
        <name>AMP</name>
        <dbReference type="ChEBI" id="CHEBI:456215"/>
    </ligand>
</feature>
<feature type="binding site" evidence="1">
    <location>
        <begin position="57"/>
        <end position="59"/>
    </location>
    <ligand>
        <name>AMP</name>
        <dbReference type="ChEBI" id="CHEBI:456215"/>
    </ligand>
</feature>
<feature type="binding site" evidence="1">
    <location>
        <begin position="85"/>
        <end position="88"/>
    </location>
    <ligand>
        <name>AMP</name>
        <dbReference type="ChEBI" id="CHEBI:456215"/>
    </ligand>
</feature>
<feature type="binding site" evidence="1">
    <location>
        <position position="92"/>
    </location>
    <ligand>
        <name>AMP</name>
        <dbReference type="ChEBI" id="CHEBI:456215"/>
    </ligand>
</feature>
<feature type="binding site" evidence="1">
    <location>
        <position position="123"/>
    </location>
    <ligand>
        <name>ATP</name>
        <dbReference type="ChEBI" id="CHEBI:30616"/>
    </ligand>
</feature>
<feature type="binding site" evidence="1">
    <location>
        <begin position="132"/>
        <end position="133"/>
    </location>
    <ligand>
        <name>ATP</name>
        <dbReference type="ChEBI" id="CHEBI:30616"/>
    </ligand>
</feature>
<feature type="binding site" evidence="1">
    <location>
        <position position="156"/>
    </location>
    <ligand>
        <name>AMP</name>
        <dbReference type="ChEBI" id="CHEBI:456215"/>
    </ligand>
</feature>
<feature type="binding site" evidence="1">
    <location>
        <position position="167"/>
    </location>
    <ligand>
        <name>AMP</name>
        <dbReference type="ChEBI" id="CHEBI:456215"/>
    </ligand>
</feature>
<feature type="binding site" evidence="1">
    <location>
        <position position="200"/>
    </location>
    <ligand>
        <name>ATP</name>
        <dbReference type="ChEBI" id="CHEBI:30616"/>
    </ligand>
</feature>
<protein>
    <recommendedName>
        <fullName evidence="1">Adenylate kinase</fullName>
        <shortName evidence="1">AK</shortName>
        <ecNumber evidence="1">2.7.4.3</ecNumber>
    </recommendedName>
    <alternativeName>
        <fullName evidence="1">ATP-AMP transphosphorylase</fullName>
    </alternativeName>
    <alternativeName>
        <fullName evidence="1">ATP:AMP phosphotransferase</fullName>
    </alternativeName>
    <alternativeName>
        <fullName evidence="1">Adenylate monophosphate kinase</fullName>
    </alternativeName>
</protein>
<accession>C5BD16</accession>
<evidence type="ECO:0000255" key="1">
    <source>
        <dbReference type="HAMAP-Rule" id="MF_00235"/>
    </source>
</evidence>
<reference key="1">
    <citation type="submission" date="2009-03" db="EMBL/GenBank/DDBJ databases">
        <title>Complete genome sequence of Edwardsiella ictaluri 93-146.</title>
        <authorList>
            <person name="Williams M.L."/>
            <person name="Gillaspy A.F."/>
            <person name="Dyer D.W."/>
            <person name="Thune R.L."/>
            <person name="Waldbieser G.C."/>
            <person name="Schuster S.C."/>
            <person name="Gipson J."/>
            <person name="Zaitshik J."/>
            <person name="Landry C."/>
            <person name="Lawrence M.L."/>
        </authorList>
    </citation>
    <scope>NUCLEOTIDE SEQUENCE [LARGE SCALE GENOMIC DNA]</scope>
    <source>
        <strain>93-146</strain>
    </source>
</reference>
<proteinExistence type="inferred from homology"/>
<comment type="function">
    <text evidence="1">Catalyzes the reversible transfer of the terminal phosphate group between ATP and AMP. Plays an important role in cellular energy homeostasis and in adenine nucleotide metabolism.</text>
</comment>
<comment type="catalytic activity">
    <reaction evidence="1">
        <text>AMP + ATP = 2 ADP</text>
        <dbReference type="Rhea" id="RHEA:12973"/>
        <dbReference type="ChEBI" id="CHEBI:30616"/>
        <dbReference type="ChEBI" id="CHEBI:456215"/>
        <dbReference type="ChEBI" id="CHEBI:456216"/>
        <dbReference type="EC" id="2.7.4.3"/>
    </reaction>
</comment>
<comment type="pathway">
    <text evidence="1">Purine metabolism; AMP biosynthesis via salvage pathway; AMP from ADP: step 1/1.</text>
</comment>
<comment type="subunit">
    <text evidence="1">Monomer.</text>
</comment>
<comment type="subcellular location">
    <subcellularLocation>
        <location evidence="1">Cytoplasm</location>
    </subcellularLocation>
</comment>
<comment type="domain">
    <text evidence="1">Consists of three domains, a large central CORE domain and two small peripheral domains, NMPbind and LID, which undergo movements during catalysis. The LID domain closes over the site of phosphoryl transfer upon ATP binding. Assembling and dissambling the active center during each catalytic cycle provides an effective means to prevent ATP hydrolysis.</text>
</comment>
<comment type="similarity">
    <text evidence="1">Belongs to the adenylate kinase family.</text>
</comment>
<organism>
    <name type="scientific">Edwardsiella ictaluri (strain 93-146)</name>
    <dbReference type="NCBI Taxonomy" id="634503"/>
    <lineage>
        <taxon>Bacteria</taxon>
        <taxon>Pseudomonadati</taxon>
        <taxon>Pseudomonadota</taxon>
        <taxon>Gammaproteobacteria</taxon>
        <taxon>Enterobacterales</taxon>
        <taxon>Hafniaceae</taxon>
        <taxon>Edwardsiella</taxon>
    </lineage>
</organism>
<sequence>MRIILLGAPGAGKGTQAQFIMEKYGIPQISTGDMLRAAVKAGSELGKQAKAIMDAGKLVTDELVIALVKERIAQEDCHNGFLLDGFPRTIPQADAMKEAGINVDYVLEFAVPDELIVDRIIGRRVHPGSGRVYHVKFNPPQVEGKDDVTGEDLMTRKDDQEETVRKRLVEYHQQTAPLIGYYGQEAQAGNTRYVKIDGTQSVDSVRAELENVLG</sequence>